<keyword id="KW-1185">Reference proteome</keyword>
<keyword id="KW-0687">Ribonucleoprotein</keyword>
<keyword id="KW-0689">Ribosomal protein</keyword>
<feature type="chain" id="PRO_0000157515" description="Large ribosomal subunit protein bL12">
    <location>
        <begin position="1"/>
        <end position="127"/>
    </location>
</feature>
<proteinExistence type="inferred from homology"/>
<evidence type="ECO:0000255" key="1">
    <source>
        <dbReference type="HAMAP-Rule" id="MF_00368"/>
    </source>
</evidence>
<evidence type="ECO:0000305" key="2"/>
<accession>Q9AAU7</accession>
<protein>
    <recommendedName>
        <fullName evidence="1">Large ribosomal subunit protein bL12</fullName>
    </recommendedName>
    <alternativeName>
        <fullName evidence="2">50S ribosomal protein L7/L12</fullName>
    </alternativeName>
</protein>
<name>RL7_CAUVC</name>
<dbReference type="EMBL" id="AE005673">
    <property type="protein sequence ID" value="AAK22484.1"/>
    <property type="molecule type" value="Genomic_DNA"/>
</dbReference>
<dbReference type="PIR" id="H87310">
    <property type="entry name" value="H87310"/>
</dbReference>
<dbReference type="RefSeq" id="NP_419316.1">
    <property type="nucleotide sequence ID" value="NC_002696.2"/>
</dbReference>
<dbReference type="RefSeq" id="WP_010918385.1">
    <property type="nucleotide sequence ID" value="NC_002696.2"/>
</dbReference>
<dbReference type="SMR" id="Q9AAU7"/>
<dbReference type="STRING" id="190650.CC_0497"/>
<dbReference type="EnsemblBacteria" id="AAK22484">
    <property type="protein sequence ID" value="AAK22484"/>
    <property type="gene ID" value="CC_0497"/>
</dbReference>
<dbReference type="KEGG" id="ccr:CC_0497"/>
<dbReference type="PATRIC" id="fig|190650.5.peg.506"/>
<dbReference type="eggNOG" id="COG0222">
    <property type="taxonomic scope" value="Bacteria"/>
</dbReference>
<dbReference type="HOGENOM" id="CLU_086499_3_0_5"/>
<dbReference type="BioCyc" id="CAULO:CC0497-MONOMER"/>
<dbReference type="Proteomes" id="UP000001816">
    <property type="component" value="Chromosome"/>
</dbReference>
<dbReference type="GO" id="GO:0022625">
    <property type="term" value="C:cytosolic large ribosomal subunit"/>
    <property type="evidence" value="ECO:0007669"/>
    <property type="project" value="TreeGrafter"/>
</dbReference>
<dbReference type="GO" id="GO:0003729">
    <property type="term" value="F:mRNA binding"/>
    <property type="evidence" value="ECO:0007669"/>
    <property type="project" value="TreeGrafter"/>
</dbReference>
<dbReference type="GO" id="GO:0003735">
    <property type="term" value="F:structural constituent of ribosome"/>
    <property type="evidence" value="ECO:0007669"/>
    <property type="project" value="InterPro"/>
</dbReference>
<dbReference type="GO" id="GO:0006412">
    <property type="term" value="P:translation"/>
    <property type="evidence" value="ECO:0007669"/>
    <property type="project" value="UniProtKB-UniRule"/>
</dbReference>
<dbReference type="CDD" id="cd00387">
    <property type="entry name" value="Ribosomal_L7_L12"/>
    <property type="match status" value="1"/>
</dbReference>
<dbReference type="FunFam" id="3.30.1390.10:FF:000001">
    <property type="entry name" value="50S ribosomal protein L7/L12"/>
    <property type="match status" value="1"/>
</dbReference>
<dbReference type="Gene3D" id="3.30.1390.10">
    <property type="match status" value="1"/>
</dbReference>
<dbReference type="Gene3D" id="1.20.5.710">
    <property type="entry name" value="Single helix bin"/>
    <property type="match status" value="1"/>
</dbReference>
<dbReference type="HAMAP" id="MF_00368">
    <property type="entry name" value="Ribosomal_bL12"/>
    <property type="match status" value="1"/>
</dbReference>
<dbReference type="InterPro" id="IPR000206">
    <property type="entry name" value="Ribosomal_bL12"/>
</dbReference>
<dbReference type="InterPro" id="IPR013823">
    <property type="entry name" value="Ribosomal_bL12_C"/>
</dbReference>
<dbReference type="InterPro" id="IPR014719">
    <property type="entry name" value="Ribosomal_bL12_C/ClpS-like"/>
</dbReference>
<dbReference type="InterPro" id="IPR008932">
    <property type="entry name" value="Ribosomal_bL12_oligo"/>
</dbReference>
<dbReference type="InterPro" id="IPR036235">
    <property type="entry name" value="Ribosomal_bL12_oligo_N_sf"/>
</dbReference>
<dbReference type="NCBIfam" id="TIGR00855">
    <property type="entry name" value="L12"/>
    <property type="match status" value="1"/>
</dbReference>
<dbReference type="PANTHER" id="PTHR45987">
    <property type="entry name" value="39S RIBOSOMAL PROTEIN L12"/>
    <property type="match status" value="1"/>
</dbReference>
<dbReference type="PANTHER" id="PTHR45987:SF4">
    <property type="entry name" value="LARGE RIBOSOMAL SUBUNIT PROTEIN BL12M"/>
    <property type="match status" value="1"/>
</dbReference>
<dbReference type="Pfam" id="PF00542">
    <property type="entry name" value="Ribosomal_L12"/>
    <property type="match status" value="1"/>
</dbReference>
<dbReference type="Pfam" id="PF16320">
    <property type="entry name" value="Ribosomal_L12_N"/>
    <property type="match status" value="1"/>
</dbReference>
<dbReference type="SUPFAM" id="SSF54736">
    <property type="entry name" value="ClpS-like"/>
    <property type="match status" value="1"/>
</dbReference>
<dbReference type="SUPFAM" id="SSF48300">
    <property type="entry name" value="Ribosomal protein L7/12, oligomerisation (N-terminal) domain"/>
    <property type="match status" value="1"/>
</dbReference>
<sequence>MSKLEKLVEELSTLSVLEAAELSKLLEEKWGVSAAAPVAVAAAGGAAAAPAEAAEEQTEFTVVLVDGGDKKINVIKEVRGVRPDLGLKEAKDLVEGAPQNVVENVSKQQAEEISKKLTEAGAKIQIK</sequence>
<comment type="function">
    <text evidence="1">Forms part of the ribosomal stalk which helps the ribosome interact with GTP-bound translation factors. Is thus essential for accurate translation.</text>
</comment>
<comment type="subunit">
    <text evidence="1">Homodimer. Part of the ribosomal stalk of the 50S ribosomal subunit. Forms a multimeric L10(L12)X complex, where L10 forms an elongated spine to which 2 to 4 L12 dimers bind in a sequential fashion. Binds GTP-bound translation factors.</text>
</comment>
<comment type="similarity">
    <text evidence="1">Belongs to the bacterial ribosomal protein bL12 family.</text>
</comment>
<gene>
    <name evidence="1" type="primary">rplL</name>
    <name type="ordered locus">CC_0497</name>
</gene>
<organism>
    <name type="scientific">Caulobacter vibrioides (strain ATCC 19089 / CIP 103742 / CB 15)</name>
    <name type="common">Caulobacter crescentus</name>
    <dbReference type="NCBI Taxonomy" id="190650"/>
    <lineage>
        <taxon>Bacteria</taxon>
        <taxon>Pseudomonadati</taxon>
        <taxon>Pseudomonadota</taxon>
        <taxon>Alphaproteobacteria</taxon>
        <taxon>Caulobacterales</taxon>
        <taxon>Caulobacteraceae</taxon>
        <taxon>Caulobacter</taxon>
    </lineage>
</organism>
<reference key="1">
    <citation type="journal article" date="2001" name="Proc. Natl. Acad. Sci. U.S.A.">
        <title>Complete genome sequence of Caulobacter crescentus.</title>
        <authorList>
            <person name="Nierman W.C."/>
            <person name="Feldblyum T.V."/>
            <person name="Laub M.T."/>
            <person name="Paulsen I.T."/>
            <person name="Nelson K.E."/>
            <person name="Eisen J.A."/>
            <person name="Heidelberg J.F."/>
            <person name="Alley M.R.K."/>
            <person name="Ohta N."/>
            <person name="Maddock J.R."/>
            <person name="Potocka I."/>
            <person name="Nelson W.C."/>
            <person name="Newton A."/>
            <person name="Stephens C."/>
            <person name="Phadke N.D."/>
            <person name="Ely B."/>
            <person name="DeBoy R.T."/>
            <person name="Dodson R.J."/>
            <person name="Durkin A.S."/>
            <person name="Gwinn M.L."/>
            <person name="Haft D.H."/>
            <person name="Kolonay J.F."/>
            <person name="Smit J."/>
            <person name="Craven M.B."/>
            <person name="Khouri H.M."/>
            <person name="Shetty J."/>
            <person name="Berry K.J."/>
            <person name="Utterback T.R."/>
            <person name="Tran K."/>
            <person name="Wolf A.M."/>
            <person name="Vamathevan J.J."/>
            <person name="Ermolaeva M.D."/>
            <person name="White O."/>
            <person name="Salzberg S.L."/>
            <person name="Venter J.C."/>
            <person name="Shapiro L."/>
            <person name="Fraser C.M."/>
        </authorList>
    </citation>
    <scope>NUCLEOTIDE SEQUENCE [LARGE SCALE GENOMIC DNA]</scope>
    <source>
        <strain>ATCC 19089 / CIP 103742 / CB 15</strain>
    </source>
</reference>